<evidence type="ECO:0000250" key="1">
    <source>
        <dbReference type="UniProtKB" id="Q8WVZ9"/>
    </source>
</evidence>
<evidence type="ECO:0000255" key="2">
    <source>
        <dbReference type="PROSITE-ProRule" id="PRU00037"/>
    </source>
</evidence>
<evidence type="ECO:0000256" key="3">
    <source>
        <dbReference type="SAM" id="MobiDB-lite"/>
    </source>
</evidence>
<evidence type="ECO:0000269" key="4">
    <source>
    </source>
</evidence>
<evidence type="ECO:0000305" key="5"/>
<evidence type="ECO:0000312" key="6">
    <source>
        <dbReference type="HGNC" id="HGNC:25340"/>
    </source>
</evidence>
<evidence type="ECO:0007744" key="7">
    <source>
        <dbReference type="PDB" id="4XC2"/>
    </source>
</evidence>
<sequence length="674" mass="76138">MQSREDAPRSRRLASPRGGKRPKKIHKPTVSAFFTGPEELKDTAHSAALLAQLKSFYDARLLCDVTIEVVTPGSGPGTGRLFPCNRNVLAAACPYFKSMFTGGMYESQQASVTMHDVDAESFEVLVDYCYTGRVSLSEANVERLYAASDMLQLEYVREACASFLARRLDLTNCTAILKFADAFGHRKLRSQAQSYIAQNFKQLSHMGSIREETLADLTLAQLLAVLRLDSLDVESEQTVCHVAVQWLEAAPKERGPSAAEVFKCVRWMHFTEEDQDYLEGLLTKPIVKKYCLDVIEGALQMRYGDLLYKSLVPVPNSSSSSSSSNSLVSAAENPPQRLGMCAKEMVIFFGHPRDPFLCCDPYSGDLYKVPSPLTCLAHTRTVTTLAVCISPDHDIYLAAQPRTDLWVYKPAQNSWQQLADRLLCREGMDVAYLNGYIYILGGRDPITGVKLKEVECYNVKRNQWALVAPLPHSFLSFDLMVIRDYLYALNSKRMFCYDPSHNMWLKCVSLKRNDFQEACVFNEEIYCICDIPVMKVYNPVRAEWRQMNNIPLVSETNNYRIIKHGQKLLLITSRTPQWKKNRVTVYEYDIRGDQWINIGTTLGLLQFDSNFFCLSARVYPSCLEPGQSFLTEEEEIPSESSTEWDLGGFSEPDSESGSSSSLSDDDFWVRVAPQ</sequence>
<reference key="1">
    <citation type="journal article" date="2004" name="Nat. Genet.">
        <title>Complete sequencing and characterization of 21,243 full-length human cDNAs.</title>
        <authorList>
            <person name="Ota T."/>
            <person name="Suzuki Y."/>
            <person name="Nishikawa T."/>
            <person name="Otsuki T."/>
            <person name="Sugiyama T."/>
            <person name="Irie R."/>
            <person name="Wakamatsu A."/>
            <person name="Hayashi K."/>
            <person name="Sato H."/>
            <person name="Nagai K."/>
            <person name="Kimura K."/>
            <person name="Makita H."/>
            <person name="Sekine M."/>
            <person name="Obayashi M."/>
            <person name="Nishi T."/>
            <person name="Shibahara T."/>
            <person name="Tanaka T."/>
            <person name="Ishii S."/>
            <person name="Yamamoto J."/>
            <person name="Saito K."/>
            <person name="Kawai Y."/>
            <person name="Isono Y."/>
            <person name="Nakamura Y."/>
            <person name="Nagahari K."/>
            <person name="Murakami K."/>
            <person name="Yasuda T."/>
            <person name="Iwayanagi T."/>
            <person name="Wagatsuma M."/>
            <person name="Shiratori A."/>
            <person name="Sudo H."/>
            <person name="Hosoiri T."/>
            <person name="Kaku Y."/>
            <person name="Kodaira H."/>
            <person name="Kondo H."/>
            <person name="Sugawara M."/>
            <person name="Takahashi M."/>
            <person name="Kanda K."/>
            <person name="Yokoi T."/>
            <person name="Furuya T."/>
            <person name="Kikkawa E."/>
            <person name="Omura Y."/>
            <person name="Abe K."/>
            <person name="Kamihara K."/>
            <person name="Katsuta N."/>
            <person name="Sato K."/>
            <person name="Tanikawa M."/>
            <person name="Yamazaki M."/>
            <person name="Ninomiya K."/>
            <person name="Ishibashi T."/>
            <person name="Yamashita H."/>
            <person name="Murakawa K."/>
            <person name="Fujimori K."/>
            <person name="Tanai H."/>
            <person name="Kimata M."/>
            <person name="Watanabe M."/>
            <person name="Hiraoka S."/>
            <person name="Chiba Y."/>
            <person name="Ishida S."/>
            <person name="Ono Y."/>
            <person name="Takiguchi S."/>
            <person name="Watanabe S."/>
            <person name="Yosida M."/>
            <person name="Hotuta T."/>
            <person name="Kusano J."/>
            <person name="Kanehori K."/>
            <person name="Takahashi-Fujii A."/>
            <person name="Hara H."/>
            <person name="Tanase T.-O."/>
            <person name="Nomura Y."/>
            <person name="Togiya S."/>
            <person name="Komai F."/>
            <person name="Hara R."/>
            <person name="Takeuchi K."/>
            <person name="Arita M."/>
            <person name="Imose N."/>
            <person name="Musashino K."/>
            <person name="Yuuki H."/>
            <person name="Oshima A."/>
            <person name="Sasaki N."/>
            <person name="Aotsuka S."/>
            <person name="Yoshikawa Y."/>
            <person name="Matsunawa H."/>
            <person name="Ichihara T."/>
            <person name="Shiohata N."/>
            <person name="Sano S."/>
            <person name="Moriya S."/>
            <person name="Momiyama H."/>
            <person name="Satoh N."/>
            <person name="Takami S."/>
            <person name="Terashima Y."/>
            <person name="Suzuki O."/>
            <person name="Nakagawa S."/>
            <person name="Senoh A."/>
            <person name="Mizoguchi H."/>
            <person name="Goto Y."/>
            <person name="Shimizu F."/>
            <person name="Wakebe H."/>
            <person name="Hishigaki H."/>
            <person name="Watanabe T."/>
            <person name="Sugiyama A."/>
            <person name="Takemoto M."/>
            <person name="Kawakami B."/>
            <person name="Yamazaki M."/>
            <person name="Watanabe K."/>
            <person name="Kumagai A."/>
            <person name="Itakura S."/>
            <person name="Fukuzumi Y."/>
            <person name="Fujimori Y."/>
            <person name="Komiyama M."/>
            <person name="Tashiro H."/>
            <person name="Tanigami A."/>
            <person name="Fujiwara T."/>
            <person name="Ono T."/>
            <person name="Yamada K."/>
            <person name="Fujii Y."/>
            <person name="Ozaki K."/>
            <person name="Hirao M."/>
            <person name="Ohmori Y."/>
            <person name="Kawabata A."/>
            <person name="Hikiji T."/>
            <person name="Kobatake N."/>
            <person name="Inagaki H."/>
            <person name="Ikema Y."/>
            <person name="Okamoto S."/>
            <person name="Okitani R."/>
            <person name="Kawakami T."/>
            <person name="Noguchi S."/>
            <person name="Itoh T."/>
            <person name="Shigeta K."/>
            <person name="Senba T."/>
            <person name="Matsumura K."/>
            <person name="Nakajima Y."/>
            <person name="Mizuno T."/>
            <person name="Morinaga M."/>
            <person name="Sasaki M."/>
            <person name="Togashi T."/>
            <person name="Oyama M."/>
            <person name="Hata H."/>
            <person name="Watanabe M."/>
            <person name="Komatsu T."/>
            <person name="Mizushima-Sugano J."/>
            <person name="Satoh T."/>
            <person name="Shirai Y."/>
            <person name="Takahashi Y."/>
            <person name="Nakagawa K."/>
            <person name="Okumura K."/>
            <person name="Nagase T."/>
            <person name="Nomura N."/>
            <person name="Kikuchi H."/>
            <person name="Masuho Y."/>
            <person name="Yamashita R."/>
            <person name="Nakai K."/>
            <person name="Yada T."/>
            <person name="Nakamura Y."/>
            <person name="Ohara O."/>
            <person name="Isogai T."/>
            <person name="Sugano S."/>
        </authorList>
    </citation>
    <scope>NUCLEOTIDE SEQUENCE [LARGE SCALE MRNA]</scope>
    <source>
        <tissue>Brain</tissue>
    </source>
</reference>
<reference key="2">
    <citation type="journal article" date="2004" name="Nature">
        <title>The DNA sequence and analysis of human chromosome 13.</title>
        <authorList>
            <person name="Dunham A."/>
            <person name="Matthews L.H."/>
            <person name="Burton J."/>
            <person name="Ashurst J.L."/>
            <person name="Howe K.L."/>
            <person name="Ashcroft K.J."/>
            <person name="Beare D.M."/>
            <person name="Burford D.C."/>
            <person name="Hunt S.E."/>
            <person name="Griffiths-Jones S."/>
            <person name="Jones M.C."/>
            <person name="Keenan S.J."/>
            <person name="Oliver K."/>
            <person name="Scott C.E."/>
            <person name="Ainscough R."/>
            <person name="Almeida J.P."/>
            <person name="Ambrose K.D."/>
            <person name="Andrews D.T."/>
            <person name="Ashwell R.I.S."/>
            <person name="Babbage A.K."/>
            <person name="Bagguley C.L."/>
            <person name="Bailey J."/>
            <person name="Bannerjee R."/>
            <person name="Barlow K.F."/>
            <person name="Bates K."/>
            <person name="Beasley H."/>
            <person name="Bird C.P."/>
            <person name="Bray-Allen S."/>
            <person name="Brown A.J."/>
            <person name="Brown J.Y."/>
            <person name="Burrill W."/>
            <person name="Carder C."/>
            <person name="Carter N.P."/>
            <person name="Chapman J.C."/>
            <person name="Clamp M.E."/>
            <person name="Clark S.Y."/>
            <person name="Clarke G."/>
            <person name="Clee C.M."/>
            <person name="Clegg S.C."/>
            <person name="Cobley V."/>
            <person name="Collins J.E."/>
            <person name="Corby N."/>
            <person name="Coville G.J."/>
            <person name="Deloukas P."/>
            <person name="Dhami P."/>
            <person name="Dunham I."/>
            <person name="Dunn M."/>
            <person name="Earthrowl M.E."/>
            <person name="Ellington A.G."/>
            <person name="Faulkner L."/>
            <person name="Frankish A.G."/>
            <person name="Frankland J."/>
            <person name="French L."/>
            <person name="Garner P."/>
            <person name="Garnett J."/>
            <person name="Gilbert J.G.R."/>
            <person name="Gilson C.J."/>
            <person name="Ghori J."/>
            <person name="Grafham D.V."/>
            <person name="Gribble S.M."/>
            <person name="Griffiths C."/>
            <person name="Hall R.E."/>
            <person name="Hammond S."/>
            <person name="Harley J.L."/>
            <person name="Hart E.A."/>
            <person name="Heath P.D."/>
            <person name="Howden P.J."/>
            <person name="Huckle E.J."/>
            <person name="Hunt P.J."/>
            <person name="Hunt A.R."/>
            <person name="Johnson C."/>
            <person name="Johnson D."/>
            <person name="Kay M."/>
            <person name="Kimberley A.M."/>
            <person name="King A."/>
            <person name="Laird G.K."/>
            <person name="Langford C.J."/>
            <person name="Lawlor S."/>
            <person name="Leongamornlert D.A."/>
            <person name="Lloyd D.M."/>
            <person name="Lloyd C."/>
            <person name="Loveland J.E."/>
            <person name="Lovell J."/>
            <person name="Martin S."/>
            <person name="Mashreghi-Mohammadi M."/>
            <person name="McLaren S.J."/>
            <person name="McMurray A."/>
            <person name="Milne S."/>
            <person name="Moore M.J.F."/>
            <person name="Nickerson T."/>
            <person name="Palmer S.A."/>
            <person name="Pearce A.V."/>
            <person name="Peck A.I."/>
            <person name="Pelan S."/>
            <person name="Phillimore B."/>
            <person name="Porter K.M."/>
            <person name="Rice C.M."/>
            <person name="Searle S."/>
            <person name="Sehra H.K."/>
            <person name="Shownkeen R."/>
            <person name="Skuce C.D."/>
            <person name="Smith M."/>
            <person name="Steward C.A."/>
            <person name="Sycamore N."/>
            <person name="Tester J."/>
            <person name="Thomas D.W."/>
            <person name="Tracey A."/>
            <person name="Tromans A."/>
            <person name="Tubby B."/>
            <person name="Wall M."/>
            <person name="Wallis J.M."/>
            <person name="West A.P."/>
            <person name="Whitehead S.L."/>
            <person name="Willey D.L."/>
            <person name="Wilming L."/>
            <person name="Wray P.W."/>
            <person name="Wright M.W."/>
            <person name="Young L."/>
            <person name="Coulson A."/>
            <person name="Durbin R.M."/>
            <person name="Hubbard T."/>
            <person name="Sulston J.E."/>
            <person name="Beck S."/>
            <person name="Bentley D.R."/>
            <person name="Rogers J."/>
            <person name="Ross M.T."/>
        </authorList>
    </citation>
    <scope>NUCLEOTIDE SEQUENCE [LARGE SCALE GENOMIC DNA]</scope>
</reference>
<reference key="3">
    <citation type="journal article" date="2004" name="Genome Res.">
        <title>The status, quality, and expansion of the NIH full-length cDNA project: the Mammalian Gene Collection (MGC).</title>
        <authorList>
            <consortium name="The MGC Project Team"/>
        </authorList>
    </citation>
    <scope>NUCLEOTIDE SEQUENCE [LARGE SCALE MRNA]</scope>
    <source>
        <tissue>Brain</tissue>
        <tissue>Prostate</tissue>
    </source>
</reference>
<reference key="4">
    <citation type="journal article" date="2007" name="BMC Genomics">
        <title>The full-ORF clone resource of the German cDNA consortium.</title>
        <authorList>
            <person name="Bechtel S."/>
            <person name="Rosenfelder H."/>
            <person name="Duda A."/>
            <person name="Schmidt C.P."/>
            <person name="Ernst U."/>
            <person name="Wellenreuther R."/>
            <person name="Mehrle A."/>
            <person name="Schuster C."/>
            <person name="Bahr A."/>
            <person name="Bloecker H."/>
            <person name="Heubner D."/>
            <person name="Hoerlein A."/>
            <person name="Michel G."/>
            <person name="Wedler H."/>
            <person name="Koehrer K."/>
            <person name="Ottenwaelder B."/>
            <person name="Poustka A."/>
            <person name="Wiemann S."/>
            <person name="Schupp I."/>
        </authorList>
    </citation>
    <scope>NUCLEOTIDE SEQUENCE [LARGE SCALE MRNA] OF 21-674</scope>
    <source>
        <tissue>Brain</tissue>
    </source>
</reference>
<reference evidence="7" key="5">
    <citation type="journal article" date="2015" name="Mol. Cell">
        <title>CUL3-KBTBD6/KBTBD7 ubiquitin ligase cooperates with GABARAP proteins to spatially restrict TIAM1-RAC1 signaling.</title>
        <authorList>
            <person name="Genau H.M."/>
            <person name="Huber J."/>
            <person name="Baschieri F."/>
            <person name="Akutsu M."/>
            <person name="Doetsch V."/>
            <person name="Farhan H."/>
            <person name="Rogov V."/>
            <person name="Behrends C."/>
        </authorList>
    </citation>
    <scope>X-RAY CRYSTALLOGRAPHY (1.90 ANGSTROMS) OF 663-673 IN COMPLEX WITH GABARAP</scope>
    <scope>FUNCTION</scope>
    <scope>PATHWAY</scope>
    <scope>SUBUNIT</scope>
    <scope>INTERACTION WITH GABARAP; GABARAPL1; GABARAPL2 AND MAP1LC3B</scope>
    <scope>SUBCELLULAR LOCATION</scope>
    <scope>DOMAIN</scope>
    <scope>MOTIF</scope>
    <scope>MUTAGENESIS OF MET-99; 668-TRP--VAL-671 AND TRP-668</scope>
</reference>
<protein>
    <recommendedName>
        <fullName evidence="5">Kelch repeat and BTB domain-containing protein 6</fullName>
    </recommendedName>
</protein>
<keyword id="KW-0002">3D-structure</keyword>
<keyword id="KW-0963">Cytoplasm</keyword>
<keyword id="KW-0880">Kelch repeat</keyword>
<keyword id="KW-0539">Nucleus</keyword>
<keyword id="KW-1267">Proteomics identification</keyword>
<keyword id="KW-1185">Reference proteome</keyword>
<keyword id="KW-0677">Repeat</keyword>
<keyword id="KW-0734">Signal transduction inhibitor</keyword>
<keyword id="KW-0834">Unfolded protein response</keyword>
<dbReference type="EMBL" id="AK056633">
    <property type="protein sequence ID" value="BAB71238.1"/>
    <property type="molecule type" value="mRNA"/>
</dbReference>
<dbReference type="EMBL" id="AK096608">
    <property type="protein sequence ID" value="BAC04826.1"/>
    <property type="status" value="ALT_SEQ"/>
    <property type="molecule type" value="mRNA"/>
</dbReference>
<dbReference type="EMBL" id="AL354696">
    <property type="status" value="NOT_ANNOTATED_CDS"/>
    <property type="molecule type" value="Genomic_DNA"/>
</dbReference>
<dbReference type="EMBL" id="BC000560">
    <property type="protein sequence ID" value="AAH00560.1"/>
    <property type="molecule type" value="mRNA"/>
</dbReference>
<dbReference type="EMBL" id="BC051349">
    <property type="protein sequence ID" value="AAH51349.1"/>
    <property type="molecule type" value="mRNA"/>
</dbReference>
<dbReference type="EMBL" id="AL833839">
    <property type="protein sequence ID" value="CAD38699.1"/>
    <property type="molecule type" value="mRNA"/>
</dbReference>
<dbReference type="CCDS" id="CCDS9376.1"/>
<dbReference type="RefSeq" id="NP_690867.3">
    <property type="nucleotide sequence ID" value="NM_152903.4"/>
</dbReference>
<dbReference type="PDB" id="4XC2">
    <property type="method" value="X-ray"/>
    <property type="resolution" value="1.90 A"/>
    <property type="chains" value="E/F/G/H=663-673"/>
</dbReference>
<dbReference type="PDBsum" id="4XC2"/>
<dbReference type="SMR" id="Q86V97"/>
<dbReference type="BioGRID" id="124639">
    <property type="interactions" value="139"/>
</dbReference>
<dbReference type="ComplexPortal" id="CPX-8935">
    <property type="entry name" value="CRL3 E3 ubiquitin ligase complex, KBTBD6-KBTBD7 variant"/>
</dbReference>
<dbReference type="CORUM" id="Q86V97"/>
<dbReference type="FunCoup" id="Q86V97">
    <property type="interactions" value="1235"/>
</dbReference>
<dbReference type="IntAct" id="Q86V97">
    <property type="interactions" value="79"/>
</dbReference>
<dbReference type="MINT" id="Q86V97"/>
<dbReference type="STRING" id="9606.ENSP00000368799"/>
<dbReference type="iPTMnet" id="Q86V97"/>
<dbReference type="PhosphoSitePlus" id="Q86V97"/>
<dbReference type="BioMuta" id="KBTBD6"/>
<dbReference type="DMDM" id="45477125"/>
<dbReference type="jPOST" id="Q86V97"/>
<dbReference type="MassIVE" id="Q86V97"/>
<dbReference type="PaxDb" id="9606-ENSP00000368799"/>
<dbReference type="PeptideAtlas" id="Q86V97"/>
<dbReference type="ProteomicsDB" id="69981"/>
<dbReference type="Pumba" id="Q86V97"/>
<dbReference type="Antibodypedia" id="23388">
    <property type="antibodies" value="56 antibodies from 12 providers"/>
</dbReference>
<dbReference type="DNASU" id="89890"/>
<dbReference type="Ensembl" id="ENST00000379485.2">
    <property type="protein sequence ID" value="ENSP00000368799.1"/>
    <property type="gene ID" value="ENSG00000165572.8"/>
</dbReference>
<dbReference type="GeneID" id="89890"/>
<dbReference type="KEGG" id="hsa:89890"/>
<dbReference type="MANE-Select" id="ENST00000379485.2">
    <property type="protein sequence ID" value="ENSP00000368799.1"/>
    <property type="RefSeq nucleotide sequence ID" value="NM_152903.5"/>
    <property type="RefSeq protein sequence ID" value="NP_690867.3"/>
</dbReference>
<dbReference type="UCSC" id="uc001uxu.2">
    <property type="organism name" value="human"/>
</dbReference>
<dbReference type="AGR" id="HGNC:25340"/>
<dbReference type="CTD" id="89890"/>
<dbReference type="DisGeNET" id="89890"/>
<dbReference type="GeneCards" id="KBTBD6"/>
<dbReference type="HGNC" id="HGNC:25340">
    <property type="gene designation" value="KBTBD6"/>
</dbReference>
<dbReference type="HPA" id="ENSG00000165572">
    <property type="expression patterns" value="Low tissue specificity"/>
</dbReference>
<dbReference type="MIM" id="617738">
    <property type="type" value="gene"/>
</dbReference>
<dbReference type="neXtProt" id="NX_Q86V97"/>
<dbReference type="OpenTargets" id="ENSG00000165572"/>
<dbReference type="PharmGKB" id="PA134955690"/>
<dbReference type="VEuPathDB" id="HostDB:ENSG00000165572"/>
<dbReference type="eggNOG" id="ENOG502QWK2">
    <property type="taxonomic scope" value="Eukaryota"/>
</dbReference>
<dbReference type="GeneTree" id="ENSGT00940000155175"/>
<dbReference type="HOGENOM" id="CLU_004253_15_1_1"/>
<dbReference type="InParanoid" id="Q86V97"/>
<dbReference type="OMA" id="FISFDLM"/>
<dbReference type="OrthoDB" id="6359816at2759"/>
<dbReference type="PAN-GO" id="Q86V97">
    <property type="GO annotations" value="0 GO annotations based on evolutionary models"/>
</dbReference>
<dbReference type="PhylomeDB" id="Q86V97"/>
<dbReference type="TreeFam" id="TF332672"/>
<dbReference type="PathwayCommons" id="Q86V97"/>
<dbReference type="Reactome" id="R-HSA-8951664">
    <property type="pathway name" value="Neddylation"/>
</dbReference>
<dbReference type="Reactome" id="R-HSA-983168">
    <property type="pathway name" value="Antigen processing: Ubiquitination &amp; Proteasome degradation"/>
</dbReference>
<dbReference type="SignaLink" id="Q86V97"/>
<dbReference type="UniPathway" id="UPA00143"/>
<dbReference type="BioGRID-ORCS" id="89890">
    <property type="hits" value="17 hits in 1191 CRISPR screens"/>
</dbReference>
<dbReference type="EvolutionaryTrace" id="Q86V97"/>
<dbReference type="GenomeRNAi" id="89890"/>
<dbReference type="Pharos" id="Q86V97">
    <property type="development level" value="Tdark"/>
</dbReference>
<dbReference type="PRO" id="PR:Q86V97"/>
<dbReference type="Proteomes" id="UP000005640">
    <property type="component" value="Chromosome 13"/>
</dbReference>
<dbReference type="RNAct" id="Q86V97">
    <property type="molecule type" value="protein"/>
</dbReference>
<dbReference type="Bgee" id="ENSG00000165572">
    <property type="expression patterns" value="Expressed in cortical plate and 182 other cell types or tissues"/>
</dbReference>
<dbReference type="GO" id="GO:0031463">
    <property type="term" value="C:Cul3-RING ubiquitin ligase complex"/>
    <property type="evidence" value="ECO:0000314"/>
    <property type="project" value="UniProtKB"/>
</dbReference>
<dbReference type="GO" id="GO:0005737">
    <property type="term" value="C:cytoplasm"/>
    <property type="evidence" value="ECO:0000314"/>
    <property type="project" value="UniProtKB"/>
</dbReference>
<dbReference type="GO" id="GO:0005829">
    <property type="term" value="C:cytosol"/>
    <property type="evidence" value="ECO:0000304"/>
    <property type="project" value="Reactome"/>
</dbReference>
<dbReference type="GO" id="GO:0005634">
    <property type="term" value="C:nucleus"/>
    <property type="evidence" value="ECO:0000314"/>
    <property type="project" value="UniProtKB"/>
</dbReference>
<dbReference type="GO" id="GO:1990756">
    <property type="term" value="F:ubiquitin-like ligase-substrate adaptor activity"/>
    <property type="evidence" value="ECO:0000318"/>
    <property type="project" value="GO_Central"/>
</dbReference>
<dbReference type="GO" id="GO:0009968">
    <property type="term" value="P:negative regulation of signal transduction"/>
    <property type="evidence" value="ECO:0007669"/>
    <property type="project" value="UniProtKB-KW"/>
</dbReference>
<dbReference type="GO" id="GO:0043161">
    <property type="term" value="P:proteasome-mediated ubiquitin-dependent protein catabolic process"/>
    <property type="evidence" value="ECO:0000315"/>
    <property type="project" value="UniProtKB"/>
</dbReference>
<dbReference type="GO" id="GO:0070936">
    <property type="term" value="P:protein K48-linked ubiquitination"/>
    <property type="evidence" value="ECO:0000314"/>
    <property type="project" value="UniProtKB"/>
</dbReference>
<dbReference type="GO" id="GO:0035020">
    <property type="term" value="P:regulation of Rac protein signal transduction"/>
    <property type="evidence" value="ECO:0000315"/>
    <property type="project" value="UniProtKB"/>
</dbReference>
<dbReference type="GO" id="GO:0006986">
    <property type="term" value="P:response to unfolded protein"/>
    <property type="evidence" value="ECO:0007669"/>
    <property type="project" value="UniProtKB-KW"/>
</dbReference>
<dbReference type="CDD" id="cd18482">
    <property type="entry name" value="BACK_KBTBD6_7"/>
    <property type="match status" value="1"/>
</dbReference>
<dbReference type="CDD" id="cd18273">
    <property type="entry name" value="BTB_POZ_KBTBD6_7"/>
    <property type="match status" value="1"/>
</dbReference>
<dbReference type="FunFam" id="2.120.10.80:FF:000028">
    <property type="entry name" value="Kelch repeat and BTB (POZ) domain-containing 7"/>
    <property type="match status" value="1"/>
</dbReference>
<dbReference type="FunFam" id="1.25.40.420:FF:000024">
    <property type="entry name" value="Kelch repeat and BTB domain containing 7"/>
    <property type="match status" value="1"/>
</dbReference>
<dbReference type="Gene3D" id="1.25.40.420">
    <property type="match status" value="1"/>
</dbReference>
<dbReference type="Gene3D" id="2.120.10.80">
    <property type="entry name" value="Kelch-type beta propeller"/>
    <property type="match status" value="1"/>
</dbReference>
<dbReference type="Gene3D" id="3.30.710.10">
    <property type="entry name" value="Potassium Channel Kv1.1, Chain A"/>
    <property type="match status" value="1"/>
</dbReference>
<dbReference type="InterPro" id="IPR011705">
    <property type="entry name" value="BACK"/>
</dbReference>
<dbReference type="InterPro" id="IPR017096">
    <property type="entry name" value="BTB-kelch_protein"/>
</dbReference>
<dbReference type="InterPro" id="IPR000210">
    <property type="entry name" value="BTB/POZ_dom"/>
</dbReference>
<dbReference type="InterPro" id="IPR046790">
    <property type="entry name" value="KBTB_W-LIR"/>
</dbReference>
<dbReference type="InterPro" id="IPR047931">
    <property type="entry name" value="KBTBD6_7_BACK"/>
</dbReference>
<dbReference type="InterPro" id="IPR047933">
    <property type="entry name" value="KBTBD6_7_BTB_POZ"/>
</dbReference>
<dbReference type="InterPro" id="IPR015915">
    <property type="entry name" value="Kelch-typ_b-propeller"/>
</dbReference>
<dbReference type="InterPro" id="IPR006652">
    <property type="entry name" value="Kelch_1"/>
</dbReference>
<dbReference type="InterPro" id="IPR011333">
    <property type="entry name" value="SKP1/BTB/POZ_sf"/>
</dbReference>
<dbReference type="PANTHER" id="PTHR24412">
    <property type="entry name" value="KELCH PROTEIN"/>
    <property type="match status" value="1"/>
</dbReference>
<dbReference type="PANTHER" id="PTHR24412:SF385">
    <property type="entry name" value="KELCH REPEAT AND BTB DOMAIN-CONTAINING PROTEIN 6"/>
    <property type="match status" value="1"/>
</dbReference>
<dbReference type="Pfam" id="PF07707">
    <property type="entry name" value="BACK"/>
    <property type="match status" value="1"/>
</dbReference>
<dbReference type="Pfam" id="PF00651">
    <property type="entry name" value="BTB"/>
    <property type="match status" value="1"/>
</dbReference>
<dbReference type="Pfam" id="PF20165">
    <property type="entry name" value="KBTB_W-LIR"/>
    <property type="match status" value="1"/>
</dbReference>
<dbReference type="Pfam" id="PF01344">
    <property type="entry name" value="Kelch_1"/>
    <property type="match status" value="1"/>
</dbReference>
<dbReference type="PIRSF" id="PIRSF037037">
    <property type="entry name" value="Kelch-like_protein_gigaxonin"/>
    <property type="match status" value="1"/>
</dbReference>
<dbReference type="SMART" id="SM00875">
    <property type="entry name" value="BACK"/>
    <property type="match status" value="1"/>
</dbReference>
<dbReference type="SMART" id="SM00225">
    <property type="entry name" value="BTB"/>
    <property type="match status" value="1"/>
</dbReference>
<dbReference type="SMART" id="SM00612">
    <property type="entry name" value="Kelch"/>
    <property type="match status" value="1"/>
</dbReference>
<dbReference type="SUPFAM" id="SSF117281">
    <property type="entry name" value="Kelch motif"/>
    <property type="match status" value="1"/>
</dbReference>
<dbReference type="SUPFAM" id="SSF54695">
    <property type="entry name" value="POZ domain"/>
    <property type="match status" value="1"/>
</dbReference>
<dbReference type="PROSITE" id="PS50097">
    <property type="entry name" value="BTB"/>
    <property type="match status" value="1"/>
</dbReference>
<organism>
    <name type="scientific">Homo sapiens</name>
    <name type="common">Human</name>
    <dbReference type="NCBI Taxonomy" id="9606"/>
    <lineage>
        <taxon>Eukaryota</taxon>
        <taxon>Metazoa</taxon>
        <taxon>Chordata</taxon>
        <taxon>Craniata</taxon>
        <taxon>Vertebrata</taxon>
        <taxon>Euteleostomi</taxon>
        <taxon>Mammalia</taxon>
        <taxon>Eutheria</taxon>
        <taxon>Euarchontoglires</taxon>
        <taxon>Primates</taxon>
        <taxon>Haplorrhini</taxon>
        <taxon>Catarrhini</taxon>
        <taxon>Hominidae</taxon>
        <taxon>Homo</taxon>
    </lineage>
</organism>
<feature type="chain" id="PRO_0000119084" description="Kelch repeat and BTB domain-containing protein 6">
    <location>
        <begin position="1"/>
        <end position="674"/>
    </location>
</feature>
<feature type="domain" description="BTB" evidence="2">
    <location>
        <begin position="63"/>
        <end position="138"/>
    </location>
</feature>
<feature type="repeat" description="Kelch 1">
    <location>
        <begin position="386"/>
        <end position="435"/>
    </location>
</feature>
<feature type="repeat" description="Kelch 2">
    <location>
        <begin position="436"/>
        <end position="484"/>
    </location>
</feature>
<feature type="repeat" description="Kelch 3">
    <location>
        <begin position="486"/>
        <end position="523"/>
    </location>
</feature>
<feature type="repeat" description="Kelch 4">
    <location>
        <begin position="524"/>
        <end position="564"/>
    </location>
</feature>
<feature type="repeat" description="Kelch 5">
    <location>
        <begin position="567"/>
        <end position="616"/>
    </location>
</feature>
<feature type="repeat" description="Kelch 6">
    <location>
        <begin position="642"/>
        <end position="673"/>
    </location>
</feature>
<feature type="region of interest" description="Disordered" evidence="3">
    <location>
        <begin position="1"/>
        <end position="28"/>
    </location>
</feature>
<feature type="region of interest" description="Disordered" evidence="3">
    <location>
        <begin position="631"/>
        <end position="674"/>
    </location>
</feature>
<feature type="short sequence motif" description="ATG8 interaction motif (AIM)" evidence="4">
    <location>
        <begin position="668"/>
        <end position="671"/>
    </location>
</feature>
<feature type="compositionally biased region" description="Basic residues" evidence="3">
    <location>
        <begin position="10"/>
        <end position="27"/>
    </location>
</feature>
<feature type="mutagenesis site" description="Loss of interaction with CUL3. Loss of function in TIAM1 ubiquitination and degradation." evidence="4">
    <original>M</original>
    <variation>A</variation>
    <location>
        <position position="99"/>
    </location>
</feature>
<feature type="mutagenesis site" description="Decreased interaction with GABARAP and GABARAPL2. Loss of function in TIAM1 ubiquitination and degradation. No effect on assembly of the CUL3(KBTBD6/7) E3 ubiquitin ligase complex." evidence="4">
    <original>WVRV</original>
    <variation>AVRA</variation>
    <location>
        <begin position="668"/>
        <end position="671"/>
    </location>
</feature>
<feature type="mutagenesis site" description="Decreased interaction with GABARAP and GABARAPL2. Loss of function in TIAM1 ubiquitination and degradation. No effect on assembly of the CUL3(KBTBD6/7) E3 ubiquitin ligase complex." evidence="4">
    <original>W</original>
    <variation>A</variation>
    <location>
        <position position="668"/>
    </location>
</feature>
<feature type="sequence conflict" description="In Ref. 1; BAB71238." evidence="5" ref="1">
    <original>L</original>
    <variation>Q</variation>
    <location>
        <position position="61"/>
    </location>
</feature>
<accession>Q86V97</accession>
<accession>Q5T6Y8</accession>
<accession>Q8N8L0</accession>
<accession>Q8NDM5</accession>
<accession>Q96MP6</accession>
<name>KBTB6_HUMAN</name>
<comment type="function">
    <text evidence="4">As part of the CUL3(KBTBD6/7) E3 ubiquitin ligase complex functions as a substrate adapter for the RAC1 guanine exchange factor (GEF) TIAM1, mediating its 'Lys-48' ubiquitination and proteasomal degradation (PubMed:25684205). By controlling this ubiquitination, regulates RAC1 signal transduction and downstream biological processes including the organization of the cytoskeleton, cell migration and cell proliferation (PubMed:25684205). Ubiquitination of TIAM1 requires the membrane-associated protein GABARAP which may restrict locally the activity of the complex (PubMed:25684205).</text>
</comment>
<comment type="pathway">
    <text evidence="4">Protein modification; protein ubiquitination.</text>
</comment>
<comment type="subunit">
    <text evidence="4">Core component of a BCR3 (BTB-CUL3-RBX1) E3 ubiquitin ligase complex, also named Cul3-RING ubiquitin ligase complex CUL3(KBTBD6/7), composed of CUL3, RBX1, KBTBD6 and KBTBD7 (PubMed:25684205). Interacts with GABARAP; the interaction is direct and is required for the ubiquitination of TIAM1 (PubMed:25684205). Interacts with GABARAPL1, GABARAPL2 and MAP1LC3B; the interaction is direct (PubMed:25684205).</text>
</comment>
<comment type="interaction">
    <interactant intactId="EBI-2514778">
        <id>Q86V97</id>
    </interactant>
    <interactant intactId="EBI-456129">
        <id>Q13618</id>
        <label>CUL3</label>
    </interactant>
    <organismsDiffer>false</organismsDiffer>
    <experiments>11</experiments>
</comment>
<comment type="interaction">
    <interactant intactId="EBI-2514778">
        <id>Q86V97</id>
    </interactant>
    <interactant intactId="EBI-712001">
        <id>O95166</id>
        <label>GABARAP</label>
    </interactant>
    <organismsDiffer>false</organismsDiffer>
    <experiments>7</experiments>
</comment>
<comment type="interaction">
    <interactant intactId="EBI-2514778">
        <id>Q86V97</id>
    </interactant>
    <interactant intactId="EBI-746969">
        <id>Q9H0R8</id>
        <label>GABARAPL1</label>
    </interactant>
    <organismsDiffer>false</organismsDiffer>
    <experiments>11</experiments>
</comment>
<comment type="interaction">
    <interactant intactId="EBI-2514778">
        <id>Q86V97</id>
    </interactant>
    <interactant intactId="EBI-720116">
        <id>P60520</id>
        <label>GABARAPL2</label>
    </interactant>
    <organismsDiffer>false</organismsDiffer>
    <experiments>5</experiments>
</comment>
<comment type="interaction">
    <interactant intactId="EBI-2514778">
        <id>Q86V97</id>
    </interactant>
    <interactant intactId="EBI-473695">
        <id>Q8WVZ9</id>
        <label>KBTBD7</label>
    </interactant>
    <organismsDiffer>false</organismsDiffer>
    <experiments>17</experiments>
</comment>
<comment type="interaction">
    <interactant intactId="EBI-2514778">
        <id>Q86V97</id>
    </interactant>
    <interactant intactId="EBI-373144">
        <id>Q9GZQ8</id>
        <label>MAP1LC3B</label>
    </interactant>
    <organismsDiffer>false</organismsDiffer>
    <experiments>6</experiments>
</comment>
<comment type="interaction">
    <interactant intactId="EBI-2514778">
        <id>Q86V97</id>
    </interactant>
    <interactant intactId="EBI-2603996">
        <id>Q9BXW4</id>
        <label>MAP1LC3C</label>
    </interactant>
    <organismsDiffer>false</organismsDiffer>
    <experiments>4</experiments>
</comment>
<comment type="subcellular location">
    <subcellularLocation>
        <location evidence="4">Cytoplasm</location>
    </subcellularLocation>
    <subcellularLocation>
        <location evidence="4">Nucleus</location>
    </subcellularLocation>
</comment>
<comment type="domain">
    <text evidence="4">The ATG8 interaction motif (AIM) mediates interaction with proteins of the ATG8 family including GABARAP.</text>
</comment>
<comment type="domain">
    <text evidence="4">The BTB domain is required for interaction with CUL3.</text>
</comment>
<comment type="domain">
    <text evidence="1">The Kelch repeats mediate interaction with TIAM1, a CUL3(KBTBD6/7) E3 ubiquitin ligase substrate.</text>
</comment>
<comment type="sequence caution" evidence="5">
    <conflict type="miscellaneous discrepancy">
        <sequence resource="EMBL-CDS" id="BAC04826"/>
    </conflict>
    <text>Probable cloning artifact.</text>
</comment>
<gene>
    <name evidence="6" type="primary">KBTBD6</name>
</gene>
<proteinExistence type="evidence at protein level"/>